<accession>B0YB89</accession>
<dbReference type="EC" id="4.2.2.2"/>
<dbReference type="EMBL" id="DS499601">
    <property type="protein sequence ID" value="EDP48479.1"/>
    <property type="molecule type" value="Genomic_DNA"/>
</dbReference>
<dbReference type="SMR" id="B0YB89"/>
<dbReference type="GlyCosmos" id="B0YB89">
    <property type="glycosylation" value="1 site, No reported glycans"/>
</dbReference>
<dbReference type="EnsemblFungi" id="EDP48479">
    <property type="protein sequence ID" value="EDP48479"/>
    <property type="gene ID" value="AFUB_091960"/>
</dbReference>
<dbReference type="VEuPathDB" id="FungiDB:AFUB_091960"/>
<dbReference type="HOGENOM" id="CLU_044863_3_0_1"/>
<dbReference type="OrthoDB" id="47320at5052"/>
<dbReference type="PhylomeDB" id="B0YB89"/>
<dbReference type="Proteomes" id="UP000001699">
    <property type="component" value="Unassembled WGS sequence"/>
</dbReference>
<dbReference type="GO" id="GO:0005576">
    <property type="term" value="C:extracellular region"/>
    <property type="evidence" value="ECO:0007669"/>
    <property type="project" value="UniProtKB-SubCell"/>
</dbReference>
<dbReference type="GO" id="GO:0030570">
    <property type="term" value="F:pectate lyase activity"/>
    <property type="evidence" value="ECO:0007669"/>
    <property type="project" value="UniProtKB-EC"/>
</dbReference>
<dbReference type="GO" id="GO:0071555">
    <property type="term" value="P:cell wall organization"/>
    <property type="evidence" value="ECO:0007669"/>
    <property type="project" value="UniProtKB-KW"/>
</dbReference>
<dbReference type="GO" id="GO:0045490">
    <property type="term" value="P:pectin catabolic process"/>
    <property type="evidence" value="ECO:0007669"/>
    <property type="project" value="TreeGrafter"/>
</dbReference>
<dbReference type="Gene3D" id="2.160.20.10">
    <property type="entry name" value="Single-stranded right-handed beta-helix, Pectin lyase-like"/>
    <property type="match status" value="1"/>
</dbReference>
<dbReference type="InterPro" id="IPR004898">
    <property type="entry name" value="Pectate_lyase_PlyH/PlyE-like"/>
</dbReference>
<dbReference type="InterPro" id="IPR012334">
    <property type="entry name" value="Pectin_lyas_fold"/>
</dbReference>
<dbReference type="InterPro" id="IPR011050">
    <property type="entry name" value="Pectin_lyase_fold/virulence"/>
</dbReference>
<dbReference type="PANTHER" id="PTHR33407">
    <property type="entry name" value="PECTATE LYASE F-RELATED"/>
    <property type="match status" value="1"/>
</dbReference>
<dbReference type="PANTHER" id="PTHR33407:SF11">
    <property type="entry name" value="PECTATE LYASE H-RELATED"/>
    <property type="match status" value="1"/>
</dbReference>
<dbReference type="Pfam" id="PF03211">
    <property type="entry name" value="Pectate_lyase"/>
    <property type="match status" value="1"/>
</dbReference>
<dbReference type="SUPFAM" id="SSF51126">
    <property type="entry name" value="Pectin lyase-like"/>
    <property type="match status" value="1"/>
</dbReference>
<keyword id="KW-0106">Calcium</keyword>
<keyword id="KW-0119">Carbohydrate metabolism</keyword>
<keyword id="KW-0961">Cell wall biogenesis/degradation</keyword>
<keyword id="KW-0325">Glycoprotein</keyword>
<keyword id="KW-0456">Lyase</keyword>
<keyword id="KW-0624">Polysaccharide degradation</keyword>
<keyword id="KW-0964">Secreted</keyword>
<keyword id="KW-0732">Signal</keyword>
<comment type="function">
    <text evidence="1">Pectinolytic enzyme consist of four classes of enzymes: pectin lyase, polygalacturonase, pectin methylesterase and rhamnogalacturonase. Among pectinolytic enzymes, pectin lyase is the most important in depolymerization of pectin, since it cleaves internal glycosidic bonds of highly methylated pectins. Favors pectate, the anion, over pectin, the methyl ester (By similarity).</text>
</comment>
<comment type="catalytic activity">
    <reaction>
        <text>Eliminative cleavage of (1-&gt;4)-alpha-D-galacturonan to give oligosaccharides with 4-deoxy-alpha-D-galact-4-enuronosyl groups at their non-reducing ends.</text>
        <dbReference type="EC" id="4.2.2.2"/>
    </reaction>
</comment>
<comment type="cofactor">
    <cofactor evidence="1">
        <name>Ca(2+)</name>
        <dbReference type="ChEBI" id="CHEBI:29108"/>
    </cofactor>
    <text evidence="1">Binds 1 Ca(2+) ion per subunit.</text>
</comment>
<comment type="subcellular location">
    <subcellularLocation>
        <location evidence="1">Secreted</location>
    </subcellularLocation>
</comment>
<comment type="similarity">
    <text evidence="4">Belongs to the polysaccharide lyase 3 family.</text>
</comment>
<protein>
    <recommendedName>
        <fullName>Probable pectate lyase D</fullName>
        <ecNumber>4.2.2.2</ecNumber>
    </recommendedName>
</protein>
<name>PLYD_ASPFC</name>
<feature type="signal peptide" evidence="2">
    <location>
        <begin position="1"/>
        <end position="17"/>
    </location>
</feature>
<feature type="chain" id="PRO_0000394575" description="Probable pectate lyase D">
    <location>
        <begin position="18"/>
        <end position="242"/>
    </location>
</feature>
<feature type="region of interest" description="Disordered" evidence="3">
    <location>
        <begin position="217"/>
        <end position="242"/>
    </location>
</feature>
<feature type="glycosylation site" description="N-linked (GlcNAc...) asparagine" evidence="2">
    <location>
        <position position="216"/>
    </location>
</feature>
<sequence>MYQKSLLFSLLASSALAAQFPIPDSKGSVTFDEPYEIAAGETYDGGYKTYGRGVSCTGQSEGGQDDTVFIVQEGGTLKNAIIGSDQIEGVYCLGACTIENVWWEAVCEDALSLKGGSGPYNIIGGGAQGADDKVIQHNSGGQVNIDGFTVYDFGKLYRSCGNCDEQYARTVTIKNVVANSGKTLVGINSNLGDTASIDSSTCATDVKKICVEYKGNDTGAEPEEISEGPSDACQYSEPLSSC</sequence>
<organism>
    <name type="scientific">Aspergillus fumigatus (strain CBS 144.89 / FGSC A1163 / CEA10)</name>
    <name type="common">Neosartorya fumigata</name>
    <dbReference type="NCBI Taxonomy" id="451804"/>
    <lineage>
        <taxon>Eukaryota</taxon>
        <taxon>Fungi</taxon>
        <taxon>Dikarya</taxon>
        <taxon>Ascomycota</taxon>
        <taxon>Pezizomycotina</taxon>
        <taxon>Eurotiomycetes</taxon>
        <taxon>Eurotiomycetidae</taxon>
        <taxon>Eurotiales</taxon>
        <taxon>Aspergillaceae</taxon>
        <taxon>Aspergillus</taxon>
        <taxon>Aspergillus subgen. Fumigati</taxon>
    </lineage>
</organism>
<evidence type="ECO:0000250" key="1"/>
<evidence type="ECO:0000255" key="2"/>
<evidence type="ECO:0000256" key="3">
    <source>
        <dbReference type="SAM" id="MobiDB-lite"/>
    </source>
</evidence>
<evidence type="ECO:0000305" key="4"/>
<reference key="1">
    <citation type="journal article" date="2008" name="PLoS Genet.">
        <title>Genomic islands in the pathogenic filamentous fungus Aspergillus fumigatus.</title>
        <authorList>
            <person name="Fedorova N.D."/>
            <person name="Khaldi N."/>
            <person name="Joardar V.S."/>
            <person name="Maiti R."/>
            <person name="Amedeo P."/>
            <person name="Anderson M.J."/>
            <person name="Crabtree J."/>
            <person name="Silva J.C."/>
            <person name="Badger J.H."/>
            <person name="Albarraq A."/>
            <person name="Angiuoli S."/>
            <person name="Bussey H."/>
            <person name="Bowyer P."/>
            <person name="Cotty P.J."/>
            <person name="Dyer P.S."/>
            <person name="Egan A."/>
            <person name="Galens K."/>
            <person name="Fraser-Liggett C.M."/>
            <person name="Haas B.J."/>
            <person name="Inman J.M."/>
            <person name="Kent R."/>
            <person name="Lemieux S."/>
            <person name="Malavazi I."/>
            <person name="Orvis J."/>
            <person name="Roemer T."/>
            <person name="Ronning C.M."/>
            <person name="Sundaram J.P."/>
            <person name="Sutton G."/>
            <person name="Turner G."/>
            <person name="Venter J.C."/>
            <person name="White O.R."/>
            <person name="Whitty B.R."/>
            <person name="Youngman P."/>
            <person name="Wolfe K.H."/>
            <person name="Goldman G.H."/>
            <person name="Wortman J.R."/>
            <person name="Jiang B."/>
            <person name="Denning D.W."/>
            <person name="Nierman W.C."/>
        </authorList>
    </citation>
    <scope>NUCLEOTIDE SEQUENCE [LARGE SCALE GENOMIC DNA]</scope>
    <source>
        <strain>CBS 144.89 / FGSC A1163 / CEA10</strain>
    </source>
</reference>
<gene>
    <name type="primary">plyD</name>
    <name type="ORF">AFUB_091960</name>
</gene>
<proteinExistence type="inferred from homology"/>